<proteinExistence type="inferred from homology"/>
<protein>
    <recommendedName>
        <fullName evidence="1">Ribonuclease D</fullName>
        <shortName evidence="1">RNase D</shortName>
        <ecNumber evidence="1">3.1.13.5</ecNumber>
    </recommendedName>
</protein>
<dbReference type="EC" id="3.1.13.5" evidence="1"/>
<dbReference type="EMBL" id="CP001189">
    <property type="protein sequence ID" value="ACI51092.1"/>
    <property type="molecule type" value="Genomic_DNA"/>
</dbReference>
<dbReference type="EMBL" id="AM889285">
    <property type="protein sequence ID" value="CAP54642.1"/>
    <property type="molecule type" value="Genomic_DNA"/>
</dbReference>
<dbReference type="RefSeq" id="WP_012223297.1">
    <property type="nucleotide sequence ID" value="NC_010125.1"/>
</dbReference>
<dbReference type="SMR" id="A9H9B7"/>
<dbReference type="STRING" id="272568.GDI0699"/>
<dbReference type="KEGG" id="gdi:GDI0699"/>
<dbReference type="KEGG" id="gdj:Gdia_1310"/>
<dbReference type="eggNOG" id="COG0349">
    <property type="taxonomic scope" value="Bacteria"/>
</dbReference>
<dbReference type="HOGENOM" id="CLU_042387_0_0_5"/>
<dbReference type="OrthoDB" id="9800549at2"/>
<dbReference type="Proteomes" id="UP000001176">
    <property type="component" value="Chromosome"/>
</dbReference>
<dbReference type="GO" id="GO:0005737">
    <property type="term" value="C:cytoplasm"/>
    <property type="evidence" value="ECO:0007669"/>
    <property type="project" value="UniProtKB-SubCell"/>
</dbReference>
<dbReference type="GO" id="GO:0008408">
    <property type="term" value="F:3'-5' exonuclease activity"/>
    <property type="evidence" value="ECO:0007669"/>
    <property type="project" value="InterPro"/>
</dbReference>
<dbReference type="GO" id="GO:0003676">
    <property type="term" value="F:nucleic acid binding"/>
    <property type="evidence" value="ECO:0007669"/>
    <property type="project" value="InterPro"/>
</dbReference>
<dbReference type="GO" id="GO:0000166">
    <property type="term" value="F:nucleotide binding"/>
    <property type="evidence" value="ECO:0007669"/>
    <property type="project" value="InterPro"/>
</dbReference>
<dbReference type="GO" id="GO:0033890">
    <property type="term" value="F:ribonuclease D activity"/>
    <property type="evidence" value="ECO:0007669"/>
    <property type="project" value="UniProtKB-UniRule"/>
</dbReference>
<dbReference type="GO" id="GO:0042780">
    <property type="term" value="P:tRNA 3'-end processing"/>
    <property type="evidence" value="ECO:0007669"/>
    <property type="project" value="UniProtKB-UniRule"/>
</dbReference>
<dbReference type="CDD" id="cd06142">
    <property type="entry name" value="RNaseD_exo"/>
    <property type="match status" value="1"/>
</dbReference>
<dbReference type="Gene3D" id="1.10.150.80">
    <property type="entry name" value="HRDC domain"/>
    <property type="match status" value="1"/>
</dbReference>
<dbReference type="Gene3D" id="3.30.420.10">
    <property type="entry name" value="Ribonuclease H-like superfamily/Ribonuclease H"/>
    <property type="match status" value="1"/>
</dbReference>
<dbReference type="HAMAP" id="MF_01899">
    <property type="entry name" value="RNase_D"/>
    <property type="match status" value="1"/>
</dbReference>
<dbReference type="InterPro" id="IPR002562">
    <property type="entry name" value="3'-5'_exonuclease_dom"/>
</dbReference>
<dbReference type="InterPro" id="IPR010997">
    <property type="entry name" value="HRDC-like_sf"/>
</dbReference>
<dbReference type="InterPro" id="IPR002121">
    <property type="entry name" value="HRDC_dom"/>
</dbReference>
<dbReference type="InterPro" id="IPR044876">
    <property type="entry name" value="HRDC_dom_sf"/>
</dbReference>
<dbReference type="InterPro" id="IPR006292">
    <property type="entry name" value="RNase_D"/>
</dbReference>
<dbReference type="InterPro" id="IPR051086">
    <property type="entry name" value="RNase_D-like"/>
</dbReference>
<dbReference type="InterPro" id="IPR012337">
    <property type="entry name" value="RNaseH-like_sf"/>
</dbReference>
<dbReference type="InterPro" id="IPR036397">
    <property type="entry name" value="RNaseH_sf"/>
</dbReference>
<dbReference type="NCBIfam" id="TIGR01388">
    <property type="entry name" value="rnd"/>
    <property type="match status" value="1"/>
</dbReference>
<dbReference type="PANTHER" id="PTHR47649">
    <property type="entry name" value="RIBONUCLEASE D"/>
    <property type="match status" value="1"/>
</dbReference>
<dbReference type="PANTHER" id="PTHR47649:SF1">
    <property type="entry name" value="RIBONUCLEASE D"/>
    <property type="match status" value="1"/>
</dbReference>
<dbReference type="Pfam" id="PF01612">
    <property type="entry name" value="DNA_pol_A_exo1"/>
    <property type="match status" value="1"/>
</dbReference>
<dbReference type="Pfam" id="PF00570">
    <property type="entry name" value="HRDC"/>
    <property type="match status" value="1"/>
</dbReference>
<dbReference type="SMART" id="SM00474">
    <property type="entry name" value="35EXOc"/>
    <property type="match status" value="1"/>
</dbReference>
<dbReference type="SMART" id="SM00341">
    <property type="entry name" value="HRDC"/>
    <property type="match status" value="1"/>
</dbReference>
<dbReference type="SUPFAM" id="SSF47819">
    <property type="entry name" value="HRDC-like"/>
    <property type="match status" value="2"/>
</dbReference>
<dbReference type="SUPFAM" id="SSF53098">
    <property type="entry name" value="Ribonuclease H-like"/>
    <property type="match status" value="1"/>
</dbReference>
<dbReference type="PROSITE" id="PS50967">
    <property type="entry name" value="HRDC"/>
    <property type="match status" value="1"/>
</dbReference>
<reference key="1">
    <citation type="journal article" date="2009" name="BMC Genomics">
        <title>Complete genome sequence of the sugarcane nitrogen-fixing endophyte Gluconacetobacter diazotrophicus Pal5.</title>
        <authorList>
            <person name="Bertalan M."/>
            <person name="Albano R."/>
            <person name="de Padua V."/>
            <person name="Rouws L."/>
            <person name="Rojas C."/>
            <person name="Hemerly A."/>
            <person name="Teixeira K."/>
            <person name="Schwab S."/>
            <person name="Araujo J."/>
            <person name="Oliveira A."/>
            <person name="Franca L."/>
            <person name="Magalhaes V."/>
            <person name="Alqueres S."/>
            <person name="Cardoso A."/>
            <person name="Almeida W."/>
            <person name="Loureiro M.M."/>
            <person name="Nogueira E."/>
            <person name="Cidade D."/>
            <person name="Oliveira D."/>
            <person name="Simao T."/>
            <person name="Macedo J."/>
            <person name="Valadao A."/>
            <person name="Dreschsel M."/>
            <person name="Freitas F."/>
            <person name="Vidal M."/>
            <person name="Guedes H."/>
            <person name="Rodrigues E."/>
            <person name="Meneses C."/>
            <person name="Brioso P."/>
            <person name="Pozzer L."/>
            <person name="Figueiredo D."/>
            <person name="Montano H."/>
            <person name="Junior J."/>
            <person name="de Souza Filho G."/>
            <person name="Martin Quintana Flores V."/>
            <person name="Ferreira B."/>
            <person name="Branco A."/>
            <person name="Gonzalez P."/>
            <person name="Guillobel H."/>
            <person name="Lemos M."/>
            <person name="Seibel L."/>
            <person name="Macedo J."/>
            <person name="Alves-Ferreira M."/>
            <person name="Sachetto-Martins G."/>
            <person name="Coelho A."/>
            <person name="Santos E."/>
            <person name="Amaral G."/>
            <person name="Neves A."/>
            <person name="Pacheco A.B."/>
            <person name="Carvalho D."/>
            <person name="Lery L."/>
            <person name="Bisch P."/>
            <person name="Rossle S.C."/>
            <person name="Urmenyi T."/>
            <person name="Rael Pereira A."/>
            <person name="Silva R."/>
            <person name="Rondinelli E."/>
            <person name="von Kruger W."/>
            <person name="Martins O."/>
            <person name="Baldani J.I."/>
            <person name="Ferreira P.C."/>
        </authorList>
    </citation>
    <scope>NUCLEOTIDE SEQUENCE [LARGE SCALE GENOMIC DNA]</scope>
    <source>
        <strain>ATCC 49037 / DSM 5601 / CCUG 37298 / CIP 103539 / LMG 7603 / PAl5</strain>
    </source>
</reference>
<reference key="2">
    <citation type="journal article" date="2010" name="Stand. Genomic Sci.">
        <title>Two genome sequences of the same bacterial strain, Gluconacetobacter diazotrophicus PAl 5, suggest a new standard in genome sequence submission.</title>
        <authorList>
            <person name="Giongo A."/>
            <person name="Tyler H.L."/>
            <person name="Zipperer U.N."/>
            <person name="Triplett E.W."/>
        </authorList>
    </citation>
    <scope>NUCLEOTIDE SEQUENCE [LARGE SCALE GENOMIC DNA]</scope>
    <source>
        <strain>ATCC 49037 / DSM 5601 / CCUG 37298 / CIP 103539 / LMG 7603 / PAl5</strain>
    </source>
</reference>
<gene>
    <name evidence="1" type="primary">rnd</name>
    <name type="ordered locus">GDI0699</name>
    <name type="ordered locus">Gdia_1310</name>
</gene>
<keyword id="KW-0963">Cytoplasm</keyword>
<keyword id="KW-0269">Exonuclease</keyword>
<keyword id="KW-0378">Hydrolase</keyword>
<keyword id="KW-0540">Nuclease</keyword>
<keyword id="KW-1185">Reference proteome</keyword>
<keyword id="KW-0819">tRNA processing</keyword>
<name>RND_GLUDA</name>
<evidence type="ECO:0000255" key="1">
    <source>
        <dbReference type="HAMAP-Rule" id="MF_01899"/>
    </source>
</evidence>
<organism>
    <name type="scientific">Gluconacetobacter diazotrophicus (strain ATCC 49037 / DSM 5601 / CCUG 37298 / CIP 103539 / LMG 7603 / PAl5)</name>
    <dbReference type="NCBI Taxonomy" id="272568"/>
    <lineage>
        <taxon>Bacteria</taxon>
        <taxon>Pseudomonadati</taxon>
        <taxon>Pseudomonadota</taxon>
        <taxon>Alphaproteobacteria</taxon>
        <taxon>Acetobacterales</taxon>
        <taxon>Acetobacteraceae</taxon>
        <taxon>Gluconacetobacter</taxon>
    </lineage>
</organism>
<comment type="function">
    <text evidence="1">Exonuclease involved in the 3' processing of various precursor tRNAs. Initiates hydrolysis at the 3'-terminus of an RNA molecule and releases 5'-mononucleotides.</text>
</comment>
<comment type="catalytic activity">
    <reaction evidence="1">
        <text>Exonucleolytic cleavage that removes extra residues from the 3'-terminus of tRNA to produce 5'-mononucleotides.</text>
        <dbReference type="EC" id="3.1.13.5"/>
    </reaction>
</comment>
<comment type="cofactor">
    <cofactor evidence="1">
        <name>a divalent metal cation</name>
        <dbReference type="ChEBI" id="CHEBI:60240"/>
    </cofactor>
</comment>
<comment type="subcellular location">
    <subcellularLocation>
        <location evidence="1">Cytoplasm</location>
    </subcellularLocation>
</comment>
<comment type="similarity">
    <text evidence="1">Belongs to the RNase D family.</text>
</comment>
<sequence length="393" mass="43232">MARTSKAGFPDPVLITTTEDLTGVVERLRREPFVSIDTEFVRERTYWPELCLVQLAGQDEVVVVDTLAPGIDLAPLGVLLDDPEVVKVFHAARQDLEIFLYLFGHLPAALFDTQVAAMVAGFGDQVGYDNLVASLTGAHIDKAHRFSDWSARPLSEAQIAYAAADVTHLRTVYQLLLERLEREGRLDWVASDLAVLSDPATFRPDPETLWERMRPRTSNRRMLGVLRAITAWREREAQRVNVPRQRLLKDESLLEIAATAPADVDALARIRGVSRGFAEGKSGTGILEAVAAARALPDGALPRQQKGKEGPRPSPALVALLKVLLAACCEEHDVAPRLVASSEDLDRLALEPEPDLPLLQGWRRTVFGDEALALKDGRMLLGVDGTRVKRIPA</sequence>
<feature type="chain" id="PRO_0000411063" description="Ribonuclease D">
    <location>
        <begin position="1"/>
        <end position="393"/>
    </location>
</feature>
<feature type="domain" description="3'-5' exonuclease" evidence="1">
    <location>
        <begin position="14"/>
        <end position="181"/>
    </location>
</feature>
<feature type="domain" description="HRDC" evidence="1">
    <location>
        <begin position="219"/>
        <end position="300"/>
    </location>
</feature>
<accession>A9H9B7</accession>